<sequence length="598" mass="64491">MFKISRKNYSDLYGITTGDSVRLGDTNLWVKVEKDLTTYGEESVFGGGKTLREGMGMNSTMKLDDKLGNAEVMDLVITNALILDYTGIYKADIGIKNGKIASIGKSGNPHLTDGVDMVVGISTEVSAGEGKIYTAGGLDTHVHWLEPEIVPVALDGGITTVIAGGTGMNDGTKATTVSPGKFWVKSALQAADGLPINAGFLAKGQGMEDPIFEQIVAGACGLKIHEDWGATGNAIDLALTVAEKTDVAVAIHTDTLNEAGFVEHTIAAMKGRTIHAYHTEGAGGGHAPDILESVKYAHILPASTNPTIPYTVNTIAEHLDMLMVCHHLNPKVPEDVAFADSRIRSQTIAAEDLLHDMGAISIMSSDTLAMGRIGEVVTRSWQMAHKMKAQFGALKGDSEFNDNNRVKRYVAKYTINPAIAHGIDSYVGSIEVGKLADIVAWEPKFFGAKPYYVVKMGVIARCVAGDPNASIPTCEPVIMRDQFGTYGRSLTSTSVSFVSKIGLENGIKEEYKLEKELLPVKNCRSINKKSMKWNSATPNLEVDPQTFDAAVDYNDLENWLEQPAAELAKKLKKTANGKYVLDAEPLTEAPLAQRYFLF</sequence>
<comment type="catalytic activity">
    <reaction evidence="1">
        <text>urea + 2 H2O + H(+) = hydrogencarbonate + 2 NH4(+)</text>
        <dbReference type="Rhea" id="RHEA:20557"/>
        <dbReference type="ChEBI" id="CHEBI:15377"/>
        <dbReference type="ChEBI" id="CHEBI:15378"/>
        <dbReference type="ChEBI" id="CHEBI:16199"/>
        <dbReference type="ChEBI" id="CHEBI:17544"/>
        <dbReference type="ChEBI" id="CHEBI:28938"/>
        <dbReference type="EC" id="3.5.1.5"/>
    </reaction>
</comment>
<comment type="cofactor">
    <cofactor evidence="1">
        <name>Ni cation</name>
        <dbReference type="ChEBI" id="CHEBI:25516"/>
    </cofactor>
    <text evidence="1">Binds 2 nickel ions per subunit.</text>
</comment>
<comment type="pathway">
    <text evidence="1">Nitrogen metabolism; urea degradation; CO(2) and NH(3) from urea (urease route): step 1/1.</text>
</comment>
<comment type="subunit">
    <text evidence="1">Heterotrimer of UreA (gamma), UreB (beta) and UreC (alpha) subunits. Three heterotrimers associate to form the active enzyme.</text>
</comment>
<comment type="subcellular location">
    <subcellularLocation>
        <location evidence="1">Cytoplasm</location>
    </subcellularLocation>
</comment>
<comment type="PTM">
    <text evidence="1">Carboxylation allows a single lysine to coordinate two nickel ions.</text>
</comment>
<comment type="similarity">
    <text evidence="1">Belongs to the metallo-dependent hydrolases superfamily. Urease alpha subunit family.</text>
</comment>
<keyword id="KW-0963">Cytoplasm</keyword>
<keyword id="KW-0903">Direct protein sequencing</keyword>
<keyword id="KW-0378">Hydrolase</keyword>
<keyword id="KW-0479">Metal-binding</keyword>
<keyword id="KW-0533">Nickel</keyword>
<accession>P0CB00</accession>
<accession>P17272</accession>
<accession>Q56554</accession>
<accession>Q9R417</accession>
<feature type="chain" id="PRO_0000067564" description="Urease subunit alpha">
    <location>
        <begin position="1"/>
        <end position="598"/>
    </location>
</feature>
<feature type="domain" description="Urease" evidence="1">
    <location>
        <begin position="136"/>
        <end position="598"/>
    </location>
</feature>
<feature type="active site" description="Proton donor" evidence="1">
    <location>
        <position position="326"/>
    </location>
</feature>
<feature type="binding site" evidence="1">
    <location>
        <position position="141"/>
    </location>
    <ligand>
        <name>Ni(2+)</name>
        <dbReference type="ChEBI" id="CHEBI:49786"/>
        <label>1</label>
    </ligand>
</feature>
<feature type="binding site" evidence="1">
    <location>
        <position position="143"/>
    </location>
    <ligand>
        <name>Ni(2+)</name>
        <dbReference type="ChEBI" id="CHEBI:49786"/>
        <label>1</label>
    </ligand>
</feature>
<feature type="binding site" description="via carbamate group" evidence="1">
    <location>
        <position position="223"/>
    </location>
    <ligand>
        <name>Ni(2+)</name>
        <dbReference type="ChEBI" id="CHEBI:49786"/>
        <label>1</label>
    </ligand>
</feature>
<feature type="binding site" description="via carbamate group" evidence="1">
    <location>
        <position position="223"/>
    </location>
    <ligand>
        <name>Ni(2+)</name>
        <dbReference type="ChEBI" id="CHEBI:49786"/>
        <label>2</label>
    </ligand>
</feature>
<feature type="binding site" evidence="1">
    <location>
        <position position="225"/>
    </location>
    <ligand>
        <name>substrate</name>
    </ligand>
</feature>
<feature type="binding site" evidence="1">
    <location>
        <position position="252"/>
    </location>
    <ligand>
        <name>Ni(2+)</name>
        <dbReference type="ChEBI" id="CHEBI:49786"/>
        <label>2</label>
    </ligand>
</feature>
<feature type="binding site" evidence="1">
    <location>
        <position position="278"/>
    </location>
    <ligand>
        <name>Ni(2+)</name>
        <dbReference type="ChEBI" id="CHEBI:49786"/>
        <label>2</label>
    </ligand>
</feature>
<feature type="binding site" evidence="1">
    <location>
        <position position="366"/>
    </location>
    <ligand>
        <name>Ni(2+)</name>
        <dbReference type="ChEBI" id="CHEBI:49786"/>
        <label>1</label>
    </ligand>
</feature>
<feature type="modified residue" description="N6-carboxylysine" evidence="1">
    <location>
        <position position="223"/>
    </location>
</feature>
<feature type="sequence conflict" description="In Ref. 5; AA sequence." evidence="2" ref="5">
    <original>W</original>
    <variation>E</variation>
    <location>
        <position position="29"/>
    </location>
</feature>
<feature type="sequence conflict" description="In Ref. 5; AA sequence." evidence="2" ref="5">
    <original>K</original>
    <variation>I</variation>
    <location>
        <position position="31"/>
    </location>
</feature>
<feature type="sequence conflict" description="In Ref. 1; CAA35697." evidence="2" ref="1">
    <original>D</original>
    <variation>DP</variation>
    <location>
        <position position="92"/>
    </location>
</feature>
<feature type="sequence conflict" description="In Ref. 1; CAA35697." evidence="2" ref="1">
    <original>W</original>
    <variation>R</variation>
    <location>
        <position position="144"/>
    </location>
</feature>
<feature type="sequence conflict" description="In Ref. 1; CAA35697." evidence="2" ref="1">
    <original>A</original>
    <variation>T</variation>
    <location>
        <position position="163"/>
    </location>
</feature>
<feature type="sequence conflict" description="In Ref. 1; CAA35697." evidence="2" ref="1">
    <original>KFWVKSA</original>
    <variation>NSELIC</variation>
    <location>
        <begin position="181"/>
        <end position="187"/>
    </location>
</feature>
<feature type="sequence conflict" description="In Ref. 1; CAA35697." evidence="2" ref="1">
    <original>TG</original>
    <variation>NR</variation>
    <location>
        <begin position="231"/>
        <end position="232"/>
    </location>
</feature>
<feature type="sequence conflict" description="In Ref. 1; CAA35697." evidence="2" ref="1">
    <original>G</original>
    <variation>E</variation>
    <location>
        <position position="371"/>
    </location>
</feature>
<feature type="sequence conflict" description="In Ref. 1; CAA35697." evidence="2" ref="1">
    <original>NNRV</original>
    <variation>KQPC</variation>
    <location>
        <begin position="403"/>
        <end position="406"/>
    </location>
</feature>
<feature type="sequence conflict" description="In Ref. 1; CAA35697." evidence="2" ref="1">
    <original>DAEPLTEAPLAQRYFLF</original>
    <variation>ACRTSNRSSISTKILLILILELFWFSNSISNYI</variation>
    <location>
        <begin position="582"/>
        <end position="598"/>
    </location>
</feature>
<organism>
    <name type="scientific">Ureaplasma urealyticum</name>
    <name type="common">Ureaplasma urealyticum biotype 2</name>
    <dbReference type="NCBI Taxonomy" id="2130"/>
    <lineage>
        <taxon>Bacteria</taxon>
        <taxon>Bacillati</taxon>
        <taxon>Mycoplasmatota</taxon>
        <taxon>Mycoplasmoidales</taxon>
        <taxon>Mycoplasmoidaceae</taxon>
        <taxon>Ureaplasma</taxon>
    </lineage>
</organism>
<protein>
    <recommendedName>
        <fullName evidence="1">Urease subunit alpha</fullName>
        <ecNumber evidence="1">3.5.1.5</ecNumber>
    </recommendedName>
    <alternativeName>
        <fullName evidence="1">Urea amidohydrolase subunit alpha</fullName>
    </alternativeName>
</protein>
<dbReference type="EC" id="3.5.1.5" evidence="1"/>
<dbReference type="EMBL" id="X51315">
    <property type="protein sequence ID" value="CAA35697.1"/>
    <property type="molecule type" value="Genomic_DNA"/>
</dbReference>
<dbReference type="EMBL" id="AF085720">
    <property type="protein sequence ID" value="AAD28106.2"/>
    <property type="molecule type" value="Genomic_DNA"/>
</dbReference>
<dbReference type="EMBL" id="AF085721">
    <property type="protein sequence ID" value="AAD28109.2"/>
    <property type="molecule type" value="Genomic_DNA"/>
</dbReference>
<dbReference type="EMBL" id="AF085722">
    <property type="protein sequence ID" value="AAD28112.2"/>
    <property type="molecule type" value="Genomic_DNA"/>
</dbReference>
<dbReference type="EMBL" id="AF085723">
    <property type="protein sequence ID" value="AAD28115.2"/>
    <property type="molecule type" value="Genomic_DNA"/>
</dbReference>
<dbReference type="EMBL" id="AF085724">
    <property type="protein sequence ID" value="AAD28118.2"/>
    <property type="molecule type" value="Genomic_DNA"/>
</dbReference>
<dbReference type="EMBL" id="AF085725">
    <property type="protein sequence ID" value="AAD28121.2"/>
    <property type="molecule type" value="Genomic_DNA"/>
</dbReference>
<dbReference type="EMBL" id="AF085727">
    <property type="protein sequence ID" value="AAD28127.2"/>
    <property type="molecule type" value="Genomic_DNA"/>
</dbReference>
<dbReference type="EMBL" id="AF085728">
    <property type="protein sequence ID" value="AAD28130.2"/>
    <property type="molecule type" value="Genomic_DNA"/>
</dbReference>
<dbReference type="EMBL" id="AF085729">
    <property type="protein sequence ID" value="AAD28133.2"/>
    <property type="molecule type" value="Genomic_DNA"/>
</dbReference>
<dbReference type="EMBL" id="M36190">
    <property type="protein sequence ID" value="AAA79777.1"/>
    <property type="molecule type" value="Genomic_DNA"/>
</dbReference>
<dbReference type="PIR" id="S10032">
    <property type="entry name" value="S10032"/>
</dbReference>
<dbReference type="RefSeq" id="WP_004025654.1">
    <property type="nucleotide sequence ID" value="NZ_QOKT01000007.1"/>
</dbReference>
<dbReference type="SMR" id="P0CB00"/>
<dbReference type="GeneID" id="93848949"/>
<dbReference type="OMA" id="DTMDGVH"/>
<dbReference type="UniPathway" id="UPA00258">
    <property type="reaction ID" value="UER00370"/>
</dbReference>
<dbReference type="GO" id="GO:0005737">
    <property type="term" value="C:cytoplasm"/>
    <property type="evidence" value="ECO:0007669"/>
    <property type="project" value="UniProtKB-SubCell"/>
</dbReference>
<dbReference type="GO" id="GO:0016151">
    <property type="term" value="F:nickel cation binding"/>
    <property type="evidence" value="ECO:0007669"/>
    <property type="project" value="UniProtKB-UniRule"/>
</dbReference>
<dbReference type="GO" id="GO:0009039">
    <property type="term" value="F:urease activity"/>
    <property type="evidence" value="ECO:0007669"/>
    <property type="project" value="UniProtKB-UniRule"/>
</dbReference>
<dbReference type="GO" id="GO:0043419">
    <property type="term" value="P:urea catabolic process"/>
    <property type="evidence" value="ECO:0007669"/>
    <property type="project" value="UniProtKB-UniRule"/>
</dbReference>
<dbReference type="CDD" id="cd00375">
    <property type="entry name" value="Urease_alpha"/>
    <property type="match status" value="1"/>
</dbReference>
<dbReference type="Gene3D" id="3.20.20.140">
    <property type="entry name" value="Metal-dependent hydrolases"/>
    <property type="match status" value="1"/>
</dbReference>
<dbReference type="Gene3D" id="2.30.40.10">
    <property type="entry name" value="Urease, subunit C, domain 1"/>
    <property type="match status" value="1"/>
</dbReference>
<dbReference type="HAMAP" id="MF_01953">
    <property type="entry name" value="Urease_alpha"/>
    <property type="match status" value="1"/>
</dbReference>
<dbReference type="InterPro" id="IPR006680">
    <property type="entry name" value="Amidohydro-rel"/>
</dbReference>
<dbReference type="InterPro" id="IPR011059">
    <property type="entry name" value="Metal-dep_hydrolase_composite"/>
</dbReference>
<dbReference type="InterPro" id="IPR032466">
    <property type="entry name" value="Metal_Hydrolase"/>
</dbReference>
<dbReference type="InterPro" id="IPR011612">
    <property type="entry name" value="Urease_alpha_N_dom"/>
</dbReference>
<dbReference type="InterPro" id="IPR050112">
    <property type="entry name" value="Urease_alpha_subunit"/>
</dbReference>
<dbReference type="InterPro" id="IPR017950">
    <property type="entry name" value="Urease_AS"/>
</dbReference>
<dbReference type="InterPro" id="IPR005848">
    <property type="entry name" value="Urease_asu"/>
</dbReference>
<dbReference type="InterPro" id="IPR017951">
    <property type="entry name" value="Urease_asu_c"/>
</dbReference>
<dbReference type="InterPro" id="IPR029754">
    <property type="entry name" value="Urease_Ni-bd"/>
</dbReference>
<dbReference type="NCBIfam" id="NF009686">
    <property type="entry name" value="PRK13207.1"/>
    <property type="match status" value="1"/>
</dbReference>
<dbReference type="NCBIfam" id="TIGR01792">
    <property type="entry name" value="urease_alph"/>
    <property type="match status" value="1"/>
</dbReference>
<dbReference type="PANTHER" id="PTHR43440">
    <property type="entry name" value="UREASE"/>
    <property type="match status" value="1"/>
</dbReference>
<dbReference type="PANTHER" id="PTHR43440:SF1">
    <property type="entry name" value="UREASE"/>
    <property type="match status" value="1"/>
</dbReference>
<dbReference type="Pfam" id="PF01979">
    <property type="entry name" value="Amidohydro_1"/>
    <property type="match status" value="1"/>
</dbReference>
<dbReference type="Pfam" id="PF00449">
    <property type="entry name" value="Urease_alpha"/>
    <property type="match status" value="1"/>
</dbReference>
<dbReference type="PRINTS" id="PR01752">
    <property type="entry name" value="UREASE"/>
</dbReference>
<dbReference type="SUPFAM" id="SSF51338">
    <property type="entry name" value="Composite domain of metallo-dependent hydrolases"/>
    <property type="match status" value="1"/>
</dbReference>
<dbReference type="SUPFAM" id="SSF51556">
    <property type="entry name" value="Metallo-dependent hydrolases"/>
    <property type="match status" value="1"/>
</dbReference>
<dbReference type="PROSITE" id="PS01120">
    <property type="entry name" value="UREASE_1"/>
    <property type="match status" value="1"/>
</dbReference>
<dbReference type="PROSITE" id="PS00145">
    <property type="entry name" value="UREASE_2"/>
    <property type="match status" value="1"/>
</dbReference>
<dbReference type="PROSITE" id="PS51368">
    <property type="entry name" value="UREASE_3"/>
    <property type="match status" value="1"/>
</dbReference>
<reference key="1">
    <citation type="journal article" date="1990" name="Mol. Microbiol.">
        <title>Ureaplasma urealyticum urease genes; use of a UGA tryptophan codon.</title>
        <authorList>
            <person name="Blanchard A."/>
        </authorList>
    </citation>
    <scope>NUCLEOTIDE SEQUENCE [GENOMIC DNA]</scope>
    <source>
        <strain>ATCC 27618 / CIP 103755 / NCTC 10177 / T960 / Serovar 8</strain>
    </source>
</reference>
<reference key="2">
    <citation type="submission" date="1995-07" db="EMBL/GenBank/DDBJ databases">
        <authorList>
            <person name="Blanchard A."/>
        </authorList>
    </citation>
    <scope>SEQUENCE REVISION TO 274-289</scope>
</reference>
<reference key="3">
    <citation type="journal article" date="2004" name="Int. J. Syst. Evol. Microbiol.">
        <title>Postgenomic taxonomy of human ureaplasmas - a case study based on multiple gene sequences.</title>
        <authorList>
            <person name="Kong F."/>
            <person name="Gilbert G.L."/>
        </authorList>
    </citation>
    <scope>NUCLEOTIDE SEQUENCE [GENOMIC DNA]</scope>
    <source>
        <strain>ATCC 27618 / CIP 103755 / NCTC 10177 / T960 / Serovar 8</strain>
        <strain>ATCC 27814 / 23 / Serovar 2</strain>
        <strain>ATCC 27816 / 58 / Serovar 4</strain>
        <strain>ATCC 27817 / 354 / Serovar 5</strain>
        <strain>ATCC 27819 / Co / Serovar 7</strain>
        <strain>ATCC 33175 / Vancouver / Serovar 9</strain>
        <strain>ATCC 33695 / K2 / Serovar 11</strain>
        <strain>ATCC 33696 / U24 / Serovar 12</strain>
        <strain>ATCC 33698 / U38 / Serovar 13</strain>
    </source>
</reference>
<reference key="4">
    <citation type="journal article" date="1999" name="Int. J. Syst. Bacteriol.">
        <title>Phylogenetic analysis of Ureaplasma urealyticum -- support for the establishment of a new species, Ureaplasma parvum.</title>
        <authorList>
            <person name="Kong F."/>
            <person name="James G."/>
            <person name="Ma Z."/>
            <person name="Gordon S."/>
            <person name="Wang B."/>
            <person name="Gilbert G.L."/>
        </authorList>
    </citation>
    <scope>NUCLEOTIDE SEQUENCE [GENOMIC DNA] OF 1-135</scope>
    <source>
        <strain>ATCC 27618 / CIP 103755 / NCTC 10177 / T960 / Serovar 8</strain>
        <strain>ATCC 27814 / 23 / Serovar 2</strain>
        <strain>ATCC 27816 / 58 / Serovar 4</strain>
        <strain>ATCC 27817 / 354 / Serovar 5</strain>
        <strain>ATCC 27819 / Co / Serovar 7</strain>
        <strain>ATCC 33175 / Vancouver / Serovar 9</strain>
        <strain>ATCC 33695 / K2 / Serovar 11</strain>
        <strain>ATCC 33696 / U24 / Serovar 12</strain>
        <strain>ATCC 33698 / U38 / Serovar 13</strain>
    </source>
</reference>
<reference key="5">
    <citation type="journal article" date="1991" name="Infect. Immun.">
        <title>Isolation and detection of urease genes in Ureaplasma urealyticum.</title>
        <authorList>
            <person name="Willoughby J.J."/>
            <person name="Russell W.C."/>
            <person name="Thirkell D."/>
            <person name="Burdon M.G."/>
        </authorList>
    </citation>
    <scope>NUCLEOTIDE SEQUENCE [GENOMIC DNA] OF 1-41</scope>
    <scope>PROTEIN SEQUENCE OF 1-36</scope>
    <source>
        <strain>ATCC 27618 / CIP 103755 / NCTC 10177 / T960 / Serovar 8</strain>
    </source>
</reference>
<gene>
    <name evidence="1" type="primary">ureC</name>
    <name type="synonym">ureA</name>
</gene>
<proteinExistence type="evidence at protein level"/>
<evidence type="ECO:0000255" key="1">
    <source>
        <dbReference type="HAMAP-Rule" id="MF_01953"/>
    </source>
</evidence>
<evidence type="ECO:0000305" key="2"/>
<name>URE1_UREUR</name>